<sequence length="276" mass="31218">WIMGHMVNEIYQIDEFVDLGANSIETDITFDDDAIAEYTYHGVPCDCKRWCTKWENVNDFLHGLQRATTPGNSKYRPELVLVVFDLKTGDLSSSTAYKAGNMFAQKLFIHYWNAGNNGGRAYIVLSIPDIDHYAFISGFREAFKNSDHADLLDKVGYDFSGNDDLSATRNALNKGGVKDREHVWQSDGITNCIGRGLGRVRDAVANRDSSNGYINKVYVWTIEKYVSVRDAFDAGVDGIMTNEPDVIVDVLNESAYSSKFRMATYEDNPWETFKYK</sequence>
<feature type="chain" id="PRO_0000392844" description="Dermonecrotic toxin LlSicTox-alphaIV3">
    <location>
        <begin position="1" status="less than"/>
        <end position="276"/>
    </location>
</feature>
<feature type="active site" evidence="5">
    <location>
        <position position="5"/>
    </location>
</feature>
<feature type="active site" description="Nucleophile" evidence="5">
    <location>
        <position position="41"/>
    </location>
</feature>
<feature type="binding site" evidence="5">
    <location>
        <position position="25"/>
    </location>
    <ligand>
        <name>Mg(2+)</name>
        <dbReference type="ChEBI" id="CHEBI:18420"/>
    </ligand>
</feature>
<feature type="binding site" evidence="5">
    <location>
        <position position="27"/>
    </location>
    <ligand>
        <name>Mg(2+)</name>
        <dbReference type="ChEBI" id="CHEBI:18420"/>
    </ligand>
</feature>
<feature type="binding site" evidence="5">
    <location>
        <position position="85"/>
    </location>
    <ligand>
        <name>Mg(2+)</name>
        <dbReference type="ChEBI" id="CHEBI:18420"/>
    </ligand>
</feature>
<feature type="disulfide bond" evidence="3">
    <location>
        <begin position="45"/>
        <end position="51"/>
    </location>
</feature>
<feature type="disulfide bond" evidence="3">
    <location>
        <begin position="47"/>
        <end position="192"/>
    </location>
</feature>
<feature type="non-terminal residue">
    <location>
        <position position="1"/>
    </location>
</feature>
<accession>C0JB29</accession>
<organism>
    <name type="scientific">Loxosceles laeta</name>
    <name type="common">South American recluse spider</name>
    <name type="synonym">Scytodes laeta</name>
    <dbReference type="NCBI Taxonomy" id="58217"/>
    <lineage>
        <taxon>Eukaryota</taxon>
        <taxon>Metazoa</taxon>
        <taxon>Ecdysozoa</taxon>
        <taxon>Arthropoda</taxon>
        <taxon>Chelicerata</taxon>
        <taxon>Arachnida</taxon>
        <taxon>Araneae</taxon>
        <taxon>Araneomorphae</taxon>
        <taxon>Haplogynae</taxon>
        <taxon>Scytodoidea</taxon>
        <taxon>Sicariidae</taxon>
        <taxon>Loxosceles</taxon>
    </lineage>
</organism>
<comment type="function">
    <text evidence="1 3">Dermonecrotic toxins cleave the phosphodiester linkage between the phosphate and headgroup of certain phospholipids (sphingolipid and lysolipid substrates), forming an alcohol (often choline) and a cyclic phosphate (By similarity). This toxin acts on sphingomyelin (SM) (By similarity). It may also act on ceramide phosphoethanolamine (CPE), lysophosphatidylcholine (LPC) and lysophosphatidylethanolamine (LPE), but not on lysophosphatidylserine (LPS), and lysophosphatidylglycerol (LPG) (By similarity). It acts by transphosphatidylation, releasing exclusively cyclic phosphate products as second products (By similarity). Induces dermonecrosis, hemolysis, increased vascular permeability, edema, inflammatory response, and platelet aggregation (By similarity).</text>
</comment>
<comment type="catalytic activity">
    <reaction evidence="1">
        <text>an N-(acyl)-sphingosylphosphocholine = an N-(acyl)-sphingosyl-1,3-cyclic phosphate + choline</text>
        <dbReference type="Rhea" id="RHEA:60652"/>
        <dbReference type="ChEBI" id="CHEBI:15354"/>
        <dbReference type="ChEBI" id="CHEBI:64583"/>
        <dbReference type="ChEBI" id="CHEBI:143892"/>
    </reaction>
</comment>
<comment type="catalytic activity">
    <reaction evidence="1">
        <text>an N-(acyl)-sphingosylphosphoethanolamine = an N-(acyl)-sphingosyl-1,3-cyclic phosphate + ethanolamine</text>
        <dbReference type="Rhea" id="RHEA:60648"/>
        <dbReference type="ChEBI" id="CHEBI:57603"/>
        <dbReference type="ChEBI" id="CHEBI:143891"/>
        <dbReference type="ChEBI" id="CHEBI:143892"/>
    </reaction>
</comment>
<comment type="catalytic activity">
    <reaction evidence="1">
        <text>a 1-acyl-sn-glycero-3-phosphocholine = a 1-acyl-sn-glycero-2,3-cyclic phosphate + choline</text>
        <dbReference type="Rhea" id="RHEA:60700"/>
        <dbReference type="ChEBI" id="CHEBI:15354"/>
        <dbReference type="ChEBI" id="CHEBI:58168"/>
        <dbReference type="ChEBI" id="CHEBI:143947"/>
    </reaction>
</comment>
<comment type="catalytic activity">
    <reaction evidence="1">
        <text>a 1-acyl-sn-glycero-3-phosphoethanolamine = a 1-acyl-sn-glycero-2,3-cyclic phosphate + ethanolamine</text>
        <dbReference type="Rhea" id="RHEA:60704"/>
        <dbReference type="ChEBI" id="CHEBI:57603"/>
        <dbReference type="ChEBI" id="CHEBI:64381"/>
        <dbReference type="ChEBI" id="CHEBI:143947"/>
    </reaction>
</comment>
<comment type="cofactor">
    <cofactor evidence="5">
        <name>Mg(2+)</name>
        <dbReference type="ChEBI" id="CHEBI:18420"/>
    </cofactor>
    <text evidence="5">Binds 1 Mg(2+) ion per subunit.</text>
</comment>
<comment type="subcellular location">
    <subcellularLocation>
        <location evidence="8">Secreted</location>
    </subcellularLocation>
</comment>
<comment type="tissue specificity">
    <text evidence="8">Expressed by the venom gland.</text>
</comment>
<comment type="similarity">
    <text evidence="7">Belongs to the arthropod phospholipase D family. Class II subfamily.</text>
</comment>
<comment type="caution">
    <text evidence="1 2 4">The most common activity assay for dermonecrotic toxins detects enzymatic activity by monitoring choline release from substrate. Liberation of choline from sphingomyelin (SM) or lysophosphatidylcholine (LPC) is commonly assumed to result from substrate hydrolysis, giving either ceramide-1-phosphate (C1P) or lysophosphatidic acid (LPA), respectively, as a second product. However, two studies from Lajoie and colleagues (2013 and 2015) report the observation of exclusive formation of cyclic phosphate products as second products, resulting from intramolecular transphosphatidylation. Cyclic phosphates have vastly different biological properties from their monoester counterparts, and they may be relevant to the pathology of brown spider envenomation.</text>
</comment>
<dbReference type="EC" id="4.6.1.-" evidence="4"/>
<dbReference type="EMBL" id="FJ171464">
    <property type="protein sequence ID" value="ACN48960.1"/>
    <property type="molecule type" value="mRNA"/>
</dbReference>
<dbReference type="SMR" id="C0JB29"/>
<dbReference type="GO" id="GO:0005576">
    <property type="term" value="C:extracellular region"/>
    <property type="evidence" value="ECO:0007669"/>
    <property type="project" value="UniProtKB-SubCell"/>
</dbReference>
<dbReference type="GO" id="GO:0016829">
    <property type="term" value="F:lyase activity"/>
    <property type="evidence" value="ECO:0007669"/>
    <property type="project" value="UniProtKB-KW"/>
</dbReference>
<dbReference type="GO" id="GO:0046872">
    <property type="term" value="F:metal ion binding"/>
    <property type="evidence" value="ECO:0007669"/>
    <property type="project" value="UniProtKB-KW"/>
</dbReference>
<dbReference type="GO" id="GO:0008081">
    <property type="term" value="F:phosphoric diester hydrolase activity"/>
    <property type="evidence" value="ECO:0007669"/>
    <property type="project" value="InterPro"/>
</dbReference>
<dbReference type="GO" id="GO:0090729">
    <property type="term" value="F:toxin activity"/>
    <property type="evidence" value="ECO:0007669"/>
    <property type="project" value="UniProtKB-KW"/>
</dbReference>
<dbReference type="GO" id="GO:0031640">
    <property type="term" value="P:killing of cells of another organism"/>
    <property type="evidence" value="ECO:0007669"/>
    <property type="project" value="UniProtKB-KW"/>
</dbReference>
<dbReference type="GO" id="GO:0016042">
    <property type="term" value="P:lipid catabolic process"/>
    <property type="evidence" value="ECO:0007669"/>
    <property type="project" value="UniProtKB-KW"/>
</dbReference>
<dbReference type="CDD" id="cd08576">
    <property type="entry name" value="GDPD_like_SMaseD_PLD"/>
    <property type="match status" value="1"/>
</dbReference>
<dbReference type="Gene3D" id="3.20.20.190">
    <property type="entry name" value="Phosphatidylinositol (PI) phosphodiesterase"/>
    <property type="match status" value="1"/>
</dbReference>
<dbReference type="InterPro" id="IPR017946">
    <property type="entry name" value="PLC-like_Pdiesterase_TIM-brl"/>
</dbReference>
<dbReference type="Pfam" id="PF13653">
    <property type="entry name" value="GDPD_2"/>
    <property type="match status" value="1"/>
</dbReference>
<dbReference type="SUPFAM" id="SSF51695">
    <property type="entry name" value="PLC-like phosphodiesterases"/>
    <property type="match status" value="1"/>
</dbReference>
<protein>
    <recommendedName>
        <fullName evidence="6">Dermonecrotic toxin LlSicTox-alphaIV3</fullName>
        <ecNumber evidence="4">4.6.1.-</ecNumber>
    </recommendedName>
    <alternativeName>
        <fullName>Phospholipase D</fullName>
        <shortName>PLD</shortName>
    </alternativeName>
    <alternativeName>
        <fullName>Sphingomyelin phosphodiesterase D</fullName>
        <shortName>SMD</shortName>
        <shortName>SMase D</shortName>
        <shortName>Sphingomyelinase D</shortName>
    </alternativeName>
</protein>
<evidence type="ECO:0000250" key="1">
    <source>
        <dbReference type="UniProtKB" id="A0A0D4WTV1"/>
    </source>
</evidence>
<evidence type="ECO:0000250" key="2">
    <source>
        <dbReference type="UniProtKB" id="A0A0D4WV12"/>
    </source>
</evidence>
<evidence type="ECO:0000250" key="3">
    <source>
        <dbReference type="UniProtKB" id="P0CE80"/>
    </source>
</evidence>
<evidence type="ECO:0000250" key="4">
    <source>
        <dbReference type="UniProtKB" id="Q4ZFU2"/>
    </source>
</evidence>
<evidence type="ECO:0000250" key="5">
    <source>
        <dbReference type="UniProtKB" id="Q8I914"/>
    </source>
</evidence>
<evidence type="ECO:0000303" key="6">
    <source>
    </source>
</evidence>
<evidence type="ECO:0000305" key="7"/>
<evidence type="ECO:0000305" key="8">
    <source>
    </source>
</evidence>
<keyword id="KW-0204">Cytolysis</keyword>
<keyword id="KW-1061">Dermonecrotic toxin</keyword>
<keyword id="KW-1015">Disulfide bond</keyword>
<keyword id="KW-0354">Hemolysis</keyword>
<keyword id="KW-0442">Lipid degradation</keyword>
<keyword id="KW-0443">Lipid metabolism</keyword>
<keyword id="KW-0456">Lyase</keyword>
<keyword id="KW-0460">Magnesium</keyword>
<keyword id="KW-0479">Metal-binding</keyword>
<keyword id="KW-0964">Secreted</keyword>
<keyword id="KW-0800">Toxin</keyword>
<name>A43_LOXLA</name>
<proteinExistence type="evidence at transcript level"/>
<reference key="1">
    <citation type="journal article" date="2009" name="Mol. Biol. Evol.">
        <title>Molecular evolution, functional variation, and proposed nomenclature of the gene family that includes sphingomyelinase D in sicariid spider venoms.</title>
        <authorList>
            <person name="Binford G.J."/>
            <person name="Bodner M.R."/>
            <person name="Cordes M.H."/>
            <person name="Baldwin K.L."/>
            <person name="Rynerson M.R."/>
            <person name="Burns S.N."/>
            <person name="Zobel-Thropp P.A."/>
        </authorList>
    </citation>
    <scope>NUCLEOTIDE SEQUENCE [MRNA]</scope>
    <scope>NOMENCLATURE</scope>
    <source>
        <tissue>Venom gland</tissue>
    </source>
</reference>